<accession>A4XZJ5</accession>
<dbReference type="EMBL" id="CP000680">
    <property type="protein sequence ID" value="ABP86761.1"/>
    <property type="molecule type" value="Genomic_DNA"/>
</dbReference>
<dbReference type="SMR" id="A4XZJ5"/>
<dbReference type="STRING" id="399739.Pmen_4014"/>
<dbReference type="KEGG" id="pmy:Pmen_4014"/>
<dbReference type="PATRIC" id="fig|399739.8.peg.4067"/>
<dbReference type="eggNOG" id="COG2967">
    <property type="taxonomic scope" value="Bacteria"/>
</dbReference>
<dbReference type="HOGENOM" id="CLU_128074_0_0_6"/>
<dbReference type="OrthoDB" id="9795226at2"/>
<dbReference type="GO" id="GO:0070987">
    <property type="term" value="P:error-free translesion synthesis"/>
    <property type="evidence" value="ECO:0007669"/>
    <property type="project" value="TreeGrafter"/>
</dbReference>
<dbReference type="Gene3D" id="2.60.40.1470">
    <property type="entry name" value="ApaG domain"/>
    <property type="match status" value="1"/>
</dbReference>
<dbReference type="HAMAP" id="MF_00791">
    <property type="entry name" value="ApaG"/>
    <property type="match status" value="1"/>
</dbReference>
<dbReference type="InterPro" id="IPR007474">
    <property type="entry name" value="ApaG_domain"/>
</dbReference>
<dbReference type="InterPro" id="IPR036767">
    <property type="entry name" value="ApaG_sf"/>
</dbReference>
<dbReference type="InterPro" id="IPR023065">
    <property type="entry name" value="Uncharacterised_ApaG"/>
</dbReference>
<dbReference type="NCBIfam" id="NF003967">
    <property type="entry name" value="PRK05461.1"/>
    <property type="match status" value="1"/>
</dbReference>
<dbReference type="PANTHER" id="PTHR14289">
    <property type="entry name" value="F-BOX ONLY PROTEIN 3"/>
    <property type="match status" value="1"/>
</dbReference>
<dbReference type="PANTHER" id="PTHR14289:SF16">
    <property type="entry name" value="POLYMERASE DELTA-INTERACTING PROTEIN 2"/>
    <property type="match status" value="1"/>
</dbReference>
<dbReference type="Pfam" id="PF04379">
    <property type="entry name" value="DUF525"/>
    <property type="match status" value="1"/>
</dbReference>
<dbReference type="SUPFAM" id="SSF110069">
    <property type="entry name" value="ApaG-like"/>
    <property type="match status" value="1"/>
</dbReference>
<dbReference type="PROSITE" id="PS51087">
    <property type="entry name" value="APAG"/>
    <property type="match status" value="1"/>
</dbReference>
<organism>
    <name type="scientific">Ectopseudomonas mendocina (strain ymp)</name>
    <name type="common">Pseudomonas mendocina</name>
    <dbReference type="NCBI Taxonomy" id="399739"/>
    <lineage>
        <taxon>Bacteria</taxon>
        <taxon>Pseudomonadati</taxon>
        <taxon>Pseudomonadota</taxon>
        <taxon>Gammaproteobacteria</taxon>
        <taxon>Pseudomonadales</taxon>
        <taxon>Pseudomonadaceae</taxon>
        <taxon>Ectopseudomonas</taxon>
    </lineage>
</organism>
<reference key="1">
    <citation type="submission" date="2007-04" db="EMBL/GenBank/DDBJ databases">
        <title>Complete sequence of Pseudomonas mendocina ymp.</title>
        <authorList>
            <consortium name="US DOE Joint Genome Institute"/>
            <person name="Copeland A."/>
            <person name="Lucas S."/>
            <person name="Lapidus A."/>
            <person name="Barry K."/>
            <person name="Glavina del Rio T."/>
            <person name="Dalin E."/>
            <person name="Tice H."/>
            <person name="Pitluck S."/>
            <person name="Kiss H."/>
            <person name="Brettin T."/>
            <person name="Detter J.C."/>
            <person name="Bruce D."/>
            <person name="Han C."/>
            <person name="Schmutz J."/>
            <person name="Larimer F."/>
            <person name="Land M."/>
            <person name="Hauser L."/>
            <person name="Kyrpides N."/>
            <person name="Mikhailova N."/>
            <person name="Hersman L."/>
            <person name="Dubois J."/>
            <person name="Maurice P."/>
            <person name="Richardson P."/>
        </authorList>
    </citation>
    <scope>NUCLEOTIDE SEQUENCE [LARGE SCALE GENOMIC DNA]</scope>
    <source>
        <strain>ymp</strain>
    </source>
</reference>
<name>APAG_ECTM1</name>
<gene>
    <name evidence="1" type="primary">apaG</name>
    <name type="ordered locus">Pmen_4014</name>
</gene>
<evidence type="ECO:0000255" key="1">
    <source>
        <dbReference type="HAMAP-Rule" id="MF_00791"/>
    </source>
</evidence>
<feature type="chain" id="PRO_1000083635" description="Protein ApaG">
    <location>
        <begin position="1"/>
        <end position="126"/>
    </location>
</feature>
<feature type="domain" description="ApaG" evidence="1">
    <location>
        <begin position="2"/>
        <end position="126"/>
    </location>
</feature>
<protein>
    <recommendedName>
        <fullName evidence="1">Protein ApaG</fullName>
    </recommendedName>
</protein>
<sequence>MSDPRYQIDVSVTTRYLAAQSQPEQNRYAFSYTVTIVNNGQLPAKLLSRHWIITDGDGRVQEVRGAGVVGQQPDIAPGASHTYSSGTVMATQVGIMQGSYQMLAEDGKRFDATIAPFRLAVPGALH</sequence>
<proteinExistence type="inferred from homology"/>